<keyword id="KW-0963">Cytoplasm</keyword>
<keyword id="KW-1185">Reference proteome</keyword>
<keyword id="KW-0819">tRNA processing</keyword>
<feature type="chain" id="PRO_1000069054" description="Protein TusB">
    <location>
        <begin position="1"/>
        <end position="95"/>
    </location>
</feature>
<comment type="function">
    <text evidence="1">Part of a sulfur-relay system required for 2-thiolation of 5-methylaminomethyl-2-thiouridine (mnm(5)s(2)U) at tRNA wobble positions.</text>
</comment>
<comment type="subunit">
    <text evidence="1">Heterohexamer, formed by a dimer of trimers. The hexameric TusBCD complex contains 2 copies each of TusB, TusC and TusD. The TusBCD complex interacts with TusE.</text>
</comment>
<comment type="subcellular location">
    <subcellularLocation>
        <location evidence="1">Cytoplasm</location>
    </subcellularLocation>
</comment>
<comment type="similarity">
    <text evidence="1">Belongs to the DsrH/TusB family.</text>
</comment>
<dbReference type="EMBL" id="CP000468">
    <property type="protein sequence ID" value="ABJ02820.1"/>
    <property type="molecule type" value="Genomic_DNA"/>
</dbReference>
<dbReference type="RefSeq" id="WP_000903381.1">
    <property type="nucleotide sequence ID" value="NZ_CADILS010000059.1"/>
</dbReference>
<dbReference type="SMR" id="A1AGN0"/>
<dbReference type="KEGG" id="ecv:APECO1_3110"/>
<dbReference type="HOGENOM" id="CLU_166087_2_1_6"/>
<dbReference type="Proteomes" id="UP000008216">
    <property type="component" value="Chromosome"/>
</dbReference>
<dbReference type="GO" id="GO:1990228">
    <property type="term" value="C:sulfurtransferase complex"/>
    <property type="evidence" value="ECO:0007669"/>
    <property type="project" value="TreeGrafter"/>
</dbReference>
<dbReference type="GO" id="GO:0002143">
    <property type="term" value="P:tRNA wobble position uridine thiolation"/>
    <property type="evidence" value="ECO:0007669"/>
    <property type="project" value="InterPro"/>
</dbReference>
<dbReference type="FunFam" id="3.40.1260.10:FF:000002">
    <property type="entry name" value="Sulfurtransferase TusB"/>
    <property type="match status" value="1"/>
</dbReference>
<dbReference type="Gene3D" id="3.40.1260.10">
    <property type="entry name" value="DsrEFH-like"/>
    <property type="match status" value="1"/>
</dbReference>
<dbReference type="HAMAP" id="MF_01564">
    <property type="entry name" value="Thiourid_synth_B"/>
    <property type="match status" value="1"/>
</dbReference>
<dbReference type="InterPro" id="IPR027396">
    <property type="entry name" value="DsrEFH-like"/>
</dbReference>
<dbReference type="InterPro" id="IPR023526">
    <property type="entry name" value="Sulphur_relay_TusB"/>
</dbReference>
<dbReference type="InterPro" id="IPR007215">
    <property type="entry name" value="Sulphur_relay_TusB/DsrH"/>
</dbReference>
<dbReference type="NCBIfam" id="NF010035">
    <property type="entry name" value="PRK13510.1"/>
    <property type="match status" value="1"/>
</dbReference>
<dbReference type="NCBIfam" id="TIGR03011">
    <property type="entry name" value="sulf_tusB_dsrH"/>
    <property type="match status" value="1"/>
</dbReference>
<dbReference type="PANTHER" id="PTHR37526">
    <property type="entry name" value="PROTEIN TUSB"/>
    <property type="match status" value="1"/>
</dbReference>
<dbReference type="PANTHER" id="PTHR37526:SF1">
    <property type="entry name" value="PROTEIN TUSB"/>
    <property type="match status" value="1"/>
</dbReference>
<dbReference type="Pfam" id="PF04077">
    <property type="entry name" value="DsrH"/>
    <property type="match status" value="1"/>
</dbReference>
<dbReference type="SUPFAM" id="SSF75169">
    <property type="entry name" value="DsrEFH-like"/>
    <property type="match status" value="1"/>
</dbReference>
<reference key="1">
    <citation type="journal article" date="2007" name="J. Bacteriol.">
        <title>The genome sequence of avian pathogenic Escherichia coli strain O1:K1:H7 shares strong similarities with human extraintestinal pathogenic E. coli genomes.</title>
        <authorList>
            <person name="Johnson T.J."/>
            <person name="Kariyawasam S."/>
            <person name="Wannemuehler Y."/>
            <person name="Mangiamele P."/>
            <person name="Johnson S.J."/>
            <person name="Doetkott C."/>
            <person name="Skyberg J.A."/>
            <person name="Lynne A.M."/>
            <person name="Johnson J.R."/>
            <person name="Nolan L.K."/>
        </authorList>
    </citation>
    <scope>NUCLEOTIDE SEQUENCE [LARGE SCALE GENOMIC DNA]</scope>
</reference>
<evidence type="ECO:0000255" key="1">
    <source>
        <dbReference type="HAMAP-Rule" id="MF_01564"/>
    </source>
</evidence>
<proteinExistence type="inferred from homology"/>
<accession>A1AGN0</accession>
<organism>
    <name type="scientific">Escherichia coli O1:K1 / APEC</name>
    <dbReference type="NCBI Taxonomy" id="405955"/>
    <lineage>
        <taxon>Bacteria</taxon>
        <taxon>Pseudomonadati</taxon>
        <taxon>Pseudomonadota</taxon>
        <taxon>Gammaproteobacteria</taxon>
        <taxon>Enterobacterales</taxon>
        <taxon>Enterobacteriaceae</taxon>
        <taxon>Escherichia</taxon>
    </lineage>
</organism>
<sequence>MLHTLHRSPWLTDFAALLRLLSEGDELLLLQDGVTAAVDGNRYLESLRNAPIKVYALNEDLIARGLTGRISNDIIPIDYTDFVRLTVKHSSQMAW</sequence>
<protein>
    <recommendedName>
        <fullName evidence="1">Protein TusB</fullName>
    </recommendedName>
    <alternativeName>
        <fullName evidence="1">tRNA 2-thiouridine synthesizing protein B</fullName>
    </alternativeName>
</protein>
<name>TUSB_ECOK1</name>
<gene>
    <name evidence="1" type="primary">tusB</name>
    <name type="ordered locus">Ecok1_33260</name>
    <name type="ORF">APECO1_3110</name>
</gene>